<reference evidence="4" key="1">
    <citation type="journal article" date="2006" name="Biochem. J.">
        <title>A novel suite of cyclotides from Viola odorata: sequence variation and the implications for structure, function and stability.</title>
        <authorList>
            <person name="Ireland D.C."/>
            <person name="Colgrave M.L."/>
            <person name="Craik D.J."/>
        </authorList>
    </citation>
    <scope>PROTEIN SEQUENCE</scope>
    <scope>FUNCTION</scope>
    <scope>MASS SPECTROMETRY</scope>
    <scope>STRUCTURE BY NMR</scope>
    <scope>DISULFIDE BONDS</scope>
</reference>
<reference key="2">
    <citation type="journal article" date="2017" name="J. Nat. Prod.">
        <title>Cyclotides from the Indian Medicinal Plant Viola odorata (Banafsha): Identification and Characterization.</title>
        <authorList>
            <person name="Narayani M."/>
            <person name="Chadha A."/>
            <person name="Srivastava S."/>
        </authorList>
    </citation>
    <scope>TISSUE SPECIFICITY</scope>
    <scope>IDENTIFICATION BY MASS SPECTROMETRY</scope>
</reference>
<comment type="function">
    <text evidence="1 2 4">Probably participates in a plant defense mechanism. Has hemolytic activity.</text>
</comment>
<comment type="tissue specificity">
    <text evidence="3">Expressed in leaves and petioles but not in petals, roots and runners (at protein level).</text>
</comment>
<comment type="domain">
    <text evidence="2">The presence of a 'disulfide through disulfide knot' structurally defines this protein as a knottin.</text>
</comment>
<comment type="PTM">
    <text evidence="1 2">This is a cyclic peptide.</text>
</comment>
<comment type="mass spectrometry" mass="3177.4" method="MALDI" evidence="2"/>
<comment type="similarity">
    <text evidence="1">Belongs to the cyclotide family. Moebius subfamily.</text>
</comment>
<comment type="caution">
    <text evidence="2">This peptide is cyclic. The start position was chosen by similarity to OAK1 (kalata-B1) for which the DNA sequence is known.</text>
</comment>
<keyword id="KW-0002">3D-structure</keyword>
<keyword id="KW-0204">Cytolysis</keyword>
<keyword id="KW-0903">Direct protein sequencing</keyword>
<keyword id="KW-1015">Disulfide bond</keyword>
<keyword id="KW-0354">Hemolysis</keyword>
<keyword id="KW-0960">Knottin</keyword>
<keyword id="KW-0611">Plant defense</keyword>
<evidence type="ECO:0000255" key="1">
    <source>
        <dbReference type="PROSITE-ProRule" id="PRU00395"/>
    </source>
</evidence>
<evidence type="ECO:0000269" key="2">
    <source>
    </source>
</evidence>
<evidence type="ECO:0000269" key="3">
    <source>
    </source>
</evidence>
<evidence type="ECO:0000305" key="4"/>
<evidence type="ECO:0007829" key="5">
    <source>
        <dbReference type="PDB" id="2GJ0"/>
    </source>
</evidence>
<feature type="peptide" id="PRO_0000294943" description="Cycloviolacin-O14" evidence="1 2">
    <location>
        <begin position="1"/>
        <end position="31"/>
    </location>
</feature>
<feature type="disulfide bond" evidence="1 2">
    <location>
        <begin position="6"/>
        <end position="20"/>
    </location>
</feature>
<feature type="disulfide bond" evidence="1 2">
    <location>
        <begin position="10"/>
        <end position="22"/>
    </location>
</feature>
<feature type="disulfide bond" evidence="1 2">
    <location>
        <begin position="15"/>
        <end position="28"/>
    </location>
</feature>
<feature type="cross-link" description="Cyclopeptide (Gly-Asn)" evidence="2">
    <location>
        <begin position="1"/>
        <end position="31"/>
    </location>
</feature>
<feature type="helix" evidence="5">
    <location>
        <begin position="3"/>
        <end position="6"/>
    </location>
</feature>
<feature type="strand" evidence="5">
    <location>
        <begin position="11"/>
        <end position="13"/>
    </location>
</feature>
<feature type="strand" evidence="5">
    <location>
        <begin position="20"/>
        <end position="24"/>
    </location>
</feature>
<feature type="strand" evidence="5">
    <location>
        <begin position="27"/>
        <end position="30"/>
    </location>
</feature>
<organism>
    <name type="scientific">Viola odorata</name>
    <name type="common">Sweet violet</name>
    <dbReference type="NCBI Taxonomy" id="97441"/>
    <lineage>
        <taxon>Eukaryota</taxon>
        <taxon>Viridiplantae</taxon>
        <taxon>Streptophyta</taxon>
        <taxon>Embryophyta</taxon>
        <taxon>Tracheophyta</taxon>
        <taxon>Spermatophyta</taxon>
        <taxon>Magnoliopsida</taxon>
        <taxon>eudicotyledons</taxon>
        <taxon>Gunneridae</taxon>
        <taxon>Pentapetalae</taxon>
        <taxon>rosids</taxon>
        <taxon>fabids</taxon>
        <taxon>Malpighiales</taxon>
        <taxon>Violaceae</taxon>
        <taxon>Viola</taxon>
        <taxon>Viola subgen. Viola</taxon>
        <taxon>Viola sect. Viola</taxon>
        <taxon>Viola subsect. Viola</taxon>
    </lineage>
</organism>
<sequence length="31" mass="3204">GSIPACGESCFKGKCYTPGCSCSKYPLCAKN</sequence>
<accession>P85177</accession>
<proteinExistence type="evidence at protein level"/>
<name>CYO14_VIOOD</name>
<dbReference type="PDB" id="2GJ0">
    <property type="method" value="NMR"/>
    <property type="chains" value="A=1-31"/>
</dbReference>
<dbReference type="PDBsum" id="2GJ0"/>
<dbReference type="BMRB" id="P85177"/>
<dbReference type="SMR" id="P85177"/>
<dbReference type="EvolutionaryTrace" id="P85177"/>
<dbReference type="GO" id="GO:0006952">
    <property type="term" value="P:defense response"/>
    <property type="evidence" value="ECO:0007669"/>
    <property type="project" value="UniProtKB-KW"/>
</dbReference>
<dbReference type="GO" id="GO:0031640">
    <property type="term" value="P:killing of cells of another organism"/>
    <property type="evidence" value="ECO:0007669"/>
    <property type="project" value="UniProtKB-KW"/>
</dbReference>
<dbReference type="InterPro" id="IPR005535">
    <property type="entry name" value="Cyclotide"/>
</dbReference>
<dbReference type="InterPro" id="IPR036146">
    <property type="entry name" value="Cyclotide_sf"/>
</dbReference>
<dbReference type="Pfam" id="PF03784">
    <property type="entry name" value="Cyclotide"/>
    <property type="match status" value="1"/>
</dbReference>
<dbReference type="SUPFAM" id="SSF57038">
    <property type="entry name" value="Cyclotides"/>
    <property type="match status" value="1"/>
</dbReference>
<dbReference type="PROSITE" id="PS51052">
    <property type="entry name" value="CYCLOTIDE"/>
    <property type="match status" value="1"/>
</dbReference>
<protein>
    <recommendedName>
        <fullName>Cycloviolacin-O14</fullName>
    </recommendedName>
</protein>